<name>RL2_SHIF8</name>
<organism>
    <name type="scientific">Shigella flexneri serotype 5b (strain 8401)</name>
    <dbReference type="NCBI Taxonomy" id="373384"/>
    <lineage>
        <taxon>Bacteria</taxon>
        <taxon>Pseudomonadati</taxon>
        <taxon>Pseudomonadota</taxon>
        <taxon>Gammaproteobacteria</taxon>
        <taxon>Enterobacterales</taxon>
        <taxon>Enterobacteriaceae</taxon>
        <taxon>Shigella</taxon>
    </lineage>
</organism>
<keyword id="KW-0007">Acetylation</keyword>
<keyword id="KW-0687">Ribonucleoprotein</keyword>
<keyword id="KW-0689">Ribosomal protein</keyword>
<keyword id="KW-0694">RNA-binding</keyword>
<keyword id="KW-0699">rRNA-binding</keyword>
<protein>
    <recommendedName>
        <fullName evidence="1">Large ribosomal subunit protein uL2</fullName>
    </recommendedName>
    <alternativeName>
        <fullName evidence="3">50S ribosomal protein L2</fullName>
    </alternativeName>
</protein>
<feature type="chain" id="PRO_0000310016" description="Large ribosomal subunit protein uL2">
    <location>
        <begin position="1"/>
        <end position="273"/>
    </location>
</feature>
<feature type="region of interest" description="Disordered" evidence="2">
    <location>
        <begin position="28"/>
        <end position="53"/>
    </location>
</feature>
<feature type="region of interest" description="Disordered" evidence="2">
    <location>
        <begin position="221"/>
        <end position="273"/>
    </location>
</feature>
<feature type="compositionally biased region" description="Low complexity" evidence="2">
    <location>
        <begin position="39"/>
        <end position="48"/>
    </location>
</feature>
<feature type="modified residue" description="N6-acetyllysine" evidence="1">
    <location>
        <position position="242"/>
    </location>
</feature>
<gene>
    <name evidence="1" type="primary">rplB</name>
    <name type="ordered locus">SFV_3336</name>
</gene>
<evidence type="ECO:0000255" key="1">
    <source>
        <dbReference type="HAMAP-Rule" id="MF_01320"/>
    </source>
</evidence>
<evidence type="ECO:0000256" key="2">
    <source>
        <dbReference type="SAM" id="MobiDB-lite"/>
    </source>
</evidence>
<evidence type="ECO:0000305" key="3"/>
<proteinExistence type="inferred from homology"/>
<accession>Q0SZY6</accession>
<reference key="1">
    <citation type="journal article" date="2006" name="BMC Genomics">
        <title>Complete genome sequence of Shigella flexneri 5b and comparison with Shigella flexneri 2a.</title>
        <authorList>
            <person name="Nie H."/>
            <person name="Yang F."/>
            <person name="Zhang X."/>
            <person name="Yang J."/>
            <person name="Chen L."/>
            <person name="Wang J."/>
            <person name="Xiong Z."/>
            <person name="Peng J."/>
            <person name="Sun L."/>
            <person name="Dong J."/>
            <person name="Xue Y."/>
            <person name="Xu X."/>
            <person name="Chen S."/>
            <person name="Yao Z."/>
            <person name="Shen Y."/>
            <person name="Jin Q."/>
        </authorList>
    </citation>
    <scope>NUCLEOTIDE SEQUENCE [LARGE SCALE GENOMIC DNA]</scope>
    <source>
        <strain>8401</strain>
    </source>
</reference>
<dbReference type="EMBL" id="CP000266">
    <property type="protein sequence ID" value="ABF05379.1"/>
    <property type="molecule type" value="Genomic_DNA"/>
</dbReference>
<dbReference type="RefSeq" id="WP_000301864.1">
    <property type="nucleotide sequence ID" value="NC_008258.1"/>
</dbReference>
<dbReference type="SMR" id="Q0SZY6"/>
<dbReference type="GeneID" id="93778670"/>
<dbReference type="KEGG" id="sfv:SFV_3336"/>
<dbReference type="HOGENOM" id="CLU_036235_2_1_6"/>
<dbReference type="Proteomes" id="UP000000659">
    <property type="component" value="Chromosome"/>
</dbReference>
<dbReference type="GO" id="GO:0005829">
    <property type="term" value="C:cytosol"/>
    <property type="evidence" value="ECO:0007669"/>
    <property type="project" value="UniProtKB-ARBA"/>
</dbReference>
<dbReference type="GO" id="GO:0015934">
    <property type="term" value="C:large ribosomal subunit"/>
    <property type="evidence" value="ECO:0007669"/>
    <property type="project" value="InterPro"/>
</dbReference>
<dbReference type="GO" id="GO:0019843">
    <property type="term" value="F:rRNA binding"/>
    <property type="evidence" value="ECO:0007669"/>
    <property type="project" value="UniProtKB-UniRule"/>
</dbReference>
<dbReference type="GO" id="GO:0003735">
    <property type="term" value="F:structural constituent of ribosome"/>
    <property type="evidence" value="ECO:0007669"/>
    <property type="project" value="InterPro"/>
</dbReference>
<dbReference type="GO" id="GO:0016740">
    <property type="term" value="F:transferase activity"/>
    <property type="evidence" value="ECO:0007669"/>
    <property type="project" value="InterPro"/>
</dbReference>
<dbReference type="GO" id="GO:0002181">
    <property type="term" value="P:cytoplasmic translation"/>
    <property type="evidence" value="ECO:0007669"/>
    <property type="project" value="TreeGrafter"/>
</dbReference>
<dbReference type="FunFam" id="2.30.30.30:FF:000001">
    <property type="entry name" value="50S ribosomal protein L2"/>
    <property type="match status" value="1"/>
</dbReference>
<dbReference type="FunFam" id="2.40.50.140:FF:000003">
    <property type="entry name" value="50S ribosomal protein L2"/>
    <property type="match status" value="1"/>
</dbReference>
<dbReference type="FunFam" id="4.10.950.10:FF:000001">
    <property type="entry name" value="50S ribosomal protein L2"/>
    <property type="match status" value="1"/>
</dbReference>
<dbReference type="Gene3D" id="2.30.30.30">
    <property type="match status" value="1"/>
</dbReference>
<dbReference type="Gene3D" id="2.40.50.140">
    <property type="entry name" value="Nucleic acid-binding proteins"/>
    <property type="match status" value="1"/>
</dbReference>
<dbReference type="Gene3D" id="4.10.950.10">
    <property type="entry name" value="Ribosomal protein L2, domain 3"/>
    <property type="match status" value="1"/>
</dbReference>
<dbReference type="HAMAP" id="MF_01320_B">
    <property type="entry name" value="Ribosomal_uL2_B"/>
    <property type="match status" value="1"/>
</dbReference>
<dbReference type="InterPro" id="IPR012340">
    <property type="entry name" value="NA-bd_OB-fold"/>
</dbReference>
<dbReference type="InterPro" id="IPR014722">
    <property type="entry name" value="Rib_uL2_dom2"/>
</dbReference>
<dbReference type="InterPro" id="IPR002171">
    <property type="entry name" value="Ribosomal_uL2"/>
</dbReference>
<dbReference type="InterPro" id="IPR005880">
    <property type="entry name" value="Ribosomal_uL2_bac/org-type"/>
</dbReference>
<dbReference type="InterPro" id="IPR022669">
    <property type="entry name" value="Ribosomal_uL2_C"/>
</dbReference>
<dbReference type="InterPro" id="IPR022671">
    <property type="entry name" value="Ribosomal_uL2_CS"/>
</dbReference>
<dbReference type="InterPro" id="IPR014726">
    <property type="entry name" value="Ribosomal_uL2_dom3"/>
</dbReference>
<dbReference type="InterPro" id="IPR022666">
    <property type="entry name" value="Ribosomal_uL2_RNA-bd_dom"/>
</dbReference>
<dbReference type="InterPro" id="IPR008991">
    <property type="entry name" value="Translation_prot_SH3-like_sf"/>
</dbReference>
<dbReference type="NCBIfam" id="TIGR01171">
    <property type="entry name" value="rplB_bact"/>
    <property type="match status" value="1"/>
</dbReference>
<dbReference type="PANTHER" id="PTHR13691:SF5">
    <property type="entry name" value="LARGE RIBOSOMAL SUBUNIT PROTEIN UL2M"/>
    <property type="match status" value="1"/>
</dbReference>
<dbReference type="PANTHER" id="PTHR13691">
    <property type="entry name" value="RIBOSOMAL PROTEIN L2"/>
    <property type="match status" value="1"/>
</dbReference>
<dbReference type="Pfam" id="PF00181">
    <property type="entry name" value="Ribosomal_L2"/>
    <property type="match status" value="1"/>
</dbReference>
<dbReference type="Pfam" id="PF03947">
    <property type="entry name" value="Ribosomal_L2_C"/>
    <property type="match status" value="1"/>
</dbReference>
<dbReference type="PIRSF" id="PIRSF002158">
    <property type="entry name" value="Ribosomal_L2"/>
    <property type="match status" value="1"/>
</dbReference>
<dbReference type="SMART" id="SM01383">
    <property type="entry name" value="Ribosomal_L2"/>
    <property type="match status" value="1"/>
</dbReference>
<dbReference type="SMART" id="SM01382">
    <property type="entry name" value="Ribosomal_L2_C"/>
    <property type="match status" value="1"/>
</dbReference>
<dbReference type="SUPFAM" id="SSF50249">
    <property type="entry name" value="Nucleic acid-binding proteins"/>
    <property type="match status" value="1"/>
</dbReference>
<dbReference type="SUPFAM" id="SSF50104">
    <property type="entry name" value="Translation proteins SH3-like domain"/>
    <property type="match status" value="1"/>
</dbReference>
<dbReference type="PROSITE" id="PS00467">
    <property type="entry name" value="RIBOSOMAL_L2"/>
    <property type="match status" value="1"/>
</dbReference>
<sequence>MAVVKCKPTSPGRRHVVKVVNPELHKGKPFAPLLEKNSKSGGRNNNGRITTRHIGGGHKQAYRIVDFKRNKDGIPAVVERLEYDPNRSANIALVLYKDGERRYILAPKGLKAGDQIQSGVDAAIKPGNTLPMRNIPVGSTVHNVEMKPGKGGQLARSAGTYVQIVARDGAYVTLRLRSGEMRKVEADCRATLGEVGNAEHMLRVLGKAGAARWRGVRPTVRGTAMNPVDHPHGGGEGRNFGKHPVTPWGVQTKGKKTRSNKRTDKFIVRRRSK</sequence>
<comment type="function">
    <text evidence="1">One of the primary rRNA binding proteins. Required for association of the 30S and 50S subunits to form the 70S ribosome, for tRNA binding and peptide bond formation. It has been suggested to have peptidyltransferase activity; this is somewhat controversial. Makes several contacts with the 16S rRNA in the 70S ribosome.</text>
</comment>
<comment type="subunit">
    <text evidence="1">Part of the 50S ribosomal subunit. Forms a bridge to the 30S subunit in the 70S ribosome.</text>
</comment>
<comment type="similarity">
    <text evidence="1">Belongs to the universal ribosomal protein uL2 family.</text>
</comment>